<proteinExistence type="evidence at protein level"/>
<organism>
    <name type="scientific">Drosophila melanogaster</name>
    <name type="common">Fruit fly</name>
    <dbReference type="NCBI Taxonomy" id="7227"/>
    <lineage>
        <taxon>Eukaryota</taxon>
        <taxon>Metazoa</taxon>
        <taxon>Ecdysozoa</taxon>
        <taxon>Arthropoda</taxon>
        <taxon>Hexapoda</taxon>
        <taxon>Insecta</taxon>
        <taxon>Pterygota</taxon>
        <taxon>Neoptera</taxon>
        <taxon>Endopterygota</taxon>
        <taxon>Diptera</taxon>
        <taxon>Brachycera</taxon>
        <taxon>Muscomorpha</taxon>
        <taxon>Ephydroidea</taxon>
        <taxon>Drosophilidae</taxon>
        <taxon>Drosophila</taxon>
        <taxon>Sophophora</taxon>
    </lineage>
</organism>
<keyword id="KW-0597">Phosphoprotein</keyword>
<keyword id="KW-1185">Reference proteome</keyword>
<reference key="1">
    <citation type="journal article" date="2000" name="Science">
        <title>The genome sequence of Drosophila melanogaster.</title>
        <authorList>
            <person name="Adams M.D."/>
            <person name="Celniker S.E."/>
            <person name="Holt R.A."/>
            <person name="Evans C.A."/>
            <person name="Gocayne J.D."/>
            <person name="Amanatides P.G."/>
            <person name="Scherer S.E."/>
            <person name="Li P.W."/>
            <person name="Hoskins R.A."/>
            <person name="Galle R.F."/>
            <person name="George R.A."/>
            <person name="Lewis S.E."/>
            <person name="Richards S."/>
            <person name="Ashburner M."/>
            <person name="Henderson S.N."/>
            <person name="Sutton G.G."/>
            <person name="Wortman J.R."/>
            <person name="Yandell M.D."/>
            <person name="Zhang Q."/>
            <person name="Chen L.X."/>
            <person name="Brandon R.C."/>
            <person name="Rogers Y.-H.C."/>
            <person name="Blazej R.G."/>
            <person name="Champe M."/>
            <person name="Pfeiffer B.D."/>
            <person name="Wan K.H."/>
            <person name="Doyle C."/>
            <person name="Baxter E.G."/>
            <person name="Helt G."/>
            <person name="Nelson C.R."/>
            <person name="Miklos G.L.G."/>
            <person name="Abril J.F."/>
            <person name="Agbayani A."/>
            <person name="An H.-J."/>
            <person name="Andrews-Pfannkoch C."/>
            <person name="Baldwin D."/>
            <person name="Ballew R.M."/>
            <person name="Basu A."/>
            <person name="Baxendale J."/>
            <person name="Bayraktaroglu L."/>
            <person name="Beasley E.M."/>
            <person name="Beeson K.Y."/>
            <person name="Benos P.V."/>
            <person name="Berman B.P."/>
            <person name="Bhandari D."/>
            <person name="Bolshakov S."/>
            <person name="Borkova D."/>
            <person name="Botchan M.R."/>
            <person name="Bouck J."/>
            <person name="Brokstein P."/>
            <person name="Brottier P."/>
            <person name="Burtis K.C."/>
            <person name="Busam D.A."/>
            <person name="Butler H."/>
            <person name="Cadieu E."/>
            <person name="Center A."/>
            <person name="Chandra I."/>
            <person name="Cherry J.M."/>
            <person name="Cawley S."/>
            <person name="Dahlke C."/>
            <person name="Davenport L.B."/>
            <person name="Davies P."/>
            <person name="de Pablos B."/>
            <person name="Delcher A."/>
            <person name="Deng Z."/>
            <person name="Mays A.D."/>
            <person name="Dew I."/>
            <person name="Dietz S.M."/>
            <person name="Dodson K."/>
            <person name="Doup L.E."/>
            <person name="Downes M."/>
            <person name="Dugan-Rocha S."/>
            <person name="Dunkov B.C."/>
            <person name="Dunn P."/>
            <person name="Durbin K.J."/>
            <person name="Evangelista C.C."/>
            <person name="Ferraz C."/>
            <person name="Ferriera S."/>
            <person name="Fleischmann W."/>
            <person name="Fosler C."/>
            <person name="Gabrielian A.E."/>
            <person name="Garg N.S."/>
            <person name="Gelbart W.M."/>
            <person name="Glasser K."/>
            <person name="Glodek A."/>
            <person name="Gong F."/>
            <person name="Gorrell J.H."/>
            <person name="Gu Z."/>
            <person name="Guan P."/>
            <person name="Harris M."/>
            <person name="Harris N.L."/>
            <person name="Harvey D.A."/>
            <person name="Heiman T.J."/>
            <person name="Hernandez J.R."/>
            <person name="Houck J."/>
            <person name="Hostin D."/>
            <person name="Houston K.A."/>
            <person name="Howland T.J."/>
            <person name="Wei M.-H."/>
            <person name="Ibegwam C."/>
            <person name="Jalali M."/>
            <person name="Kalush F."/>
            <person name="Karpen G.H."/>
            <person name="Ke Z."/>
            <person name="Kennison J.A."/>
            <person name="Ketchum K.A."/>
            <person name="Kimmel B.E."/>
            <person name="Kodira C.D."/>
            <person name="Kraft C.L."/>
            <person name="Kravitz S."/>
            <person name="Kulp D."/>
            <person name="Lai Z."/>
            <person name="Lasko P."/>
            <person name="Lei Y."/>
            <person name="Levitsky A.A."/>
            <person name="Li J.H."/>
            <person name="Li Z."/>
            <person name="Liang Y."/>
            <person name="Lin X."/>
            <person name="Liu X."/>
            <person name="Mattei B."/>
            <person name="McIntosh T.C."/>
            <person name="McLeod M.P."/>
            <person name="McPherson D."/>
            <person name="Merkulov G."/>
            <person name="Milshina N.V."/>
            <person name="Mobarry C."/>
            <person name="Morris J."/>
            <person name="Moshrefi A."/>
            <person name="Mount S.M."/>
            <person name="Moy M."/>
            <person name="Murphy B."/>
            <person name="Murphy L."/>
            <person name="Muzny D.M."/>
            <person name="Nelson D.L."/>
            <person name="Nelson D.R."/>
            <person name="Nelson K.A."/>
            <person name="Nixon K."/>
            <person name="Nusskern D.R."/>
            <person name="Pacleb J.M."/>
            <person name="Palazzolo M."/>
            <person name="Pittman G.S."/>
            <person name="Pan S."/>
            <person name="Pollard J."/>
            <person name="Puri V."/>
            <person name="Reese M.G."/>
            <person name="Reinert K."/>
            <person name="Remington K."/>
            <person name="Saunders R.D.C."/>
            <person name="Scheeler F."/>
            <person name="Shen H."/>
            <person name="Shue B.C."/>
            <person name="Siden-Kiamos I."/>
            <person name="Simpson M."/>
            <person name="Skupski M.P."/>
            <person name="Smith T.J."/>
            <person name="Spier E."/>
            <person name="Spradling A.C."/>
            <person name="Stapleton M."/>
            <person name="Strong R."/>
            <person name="Sun E."/>
            <person name="Svirskas R."/>
            <person name="Tector C."/>
            <person name="Turner R."/>
            <person name="Venter E."/>
            <person name="Wang A.H."/>
            <person name="Wang X."/>
            <person name="Wang Z.-Y."/>
            <person name="Wassarman D.A."/>
            <person name="Weinstock G.M."/>
            <person name="Weissenbach J."/>
            <person name="Williams S.M."/>
            <person name="Woodage T."/>
            <person name="Worley K.C."/>
            <person name="Wu D."/>
            <person name="Yang S."/>
            <person name="Yao Q.A."/>
            <person name="Ye J."/>
            <person name="Yeh R.-F."/>
            <person name="Zaveri J.S."/>
            <person name="Zhan M."/>
            <person name="Zhang G."/>
            <person name="Zhao Q."/>
            <person name="Zheng L."/>
            <person name="Zheng X.H."/>
            <person name="Zhong F.N."/>
            <person name="Zhong W."/>
            <person name="Zhou X."/>
            <person name="Zhu S.C."/>
            <person name="Zhu X."/>
            <person name="Smith H.O."/>
            <person name="Gibbs R.A."/>
            <person name="Myers E.W."/>
            <person name="Rubin G.M."/>
            <person name="Venter J.C."/>
        </authorList>
    </citation>
    <scope>NUCLEOTIDE SEQUENCE [LARGE SCALE GENOMIC DNA]</scope>
    <source>
        <strain>Berkeley</strain>
    </source>
</reference>
<reference key="2">
    <citation type="journal article" date="2002" name="Genome Biol.">
        <title>Annotation of the Drosophila melanogaster euchromatic genome: a systematic review.</title>
        <authorList>
            <person name="Misra S."/>
            <person name="Crosby M.A."/>
            <person name="Mungall C.J."/>
            <person name="Matthews B.B."/>
            <person name="Campbell K.S."/>
            <person name="Hradecky P."/>
            <person name="Huang Y."/>
            <person name="Kaminker J.S."/>
            <person name="Millburn G.H."/>
            <person name="Prochnik S.E."/>
            <person name="Smith C.D."/>
            <person name="Tupy J.L."/>
            <person name="Whitfield E.J."/>
            <person name="Bayraktaroglu L."/>
            <person name="Berman B.P."/>
            <person name="Bettencourt B.R."/>
            <person name="Celniker S.E."/>
            <person name="de Grey A.D.N.J."/>
            <person name="Drysdale R.A."/>
            <person name="Harris N.L."/>
            <person name="Richter J."/>
            <person name="Russo S."/>
            <person name="Schroeder A.J."/>
            <person name="Shu S.Q."/>
            <person name="Stapleton M."/>
            <person name="Yamada C."/>
            <person name="Ashburner M."/>
            <person name="Gelbart W.M."/>
            <person name="Rubin G.M."/>
            <person name="Lewis S.E."/>
        </authorList>
    </citation>
    <scope>GENOME REANNOTATION</scope>
    <source>
        <strain>Berkeley</strain>
    </source>
</reference>
<reference key="3">
    <citation type="journal article" date="2002" name="Genome Biol.">
        <title>A Drosophila full-length cDNA resource.</title>
        <authorList>
            <person name="Stapleton M."/>
            <person name="Carlson J.W."/>
            <person name="Brokstein P."/>
            <person name="Yu C."/>
            <person name="Champe M."/>
            <person name="George R.A."/>
            <person name="Guarin H."/>
            <person name="Kronmiller B."/>
            <person name="Pacleb J.M."/>
            <person name="Park S."/>
            <person name="Wan K.H."/>
            <person name="Rubin G.M."/>
            <person name="Celniker S.E."/>
        </authorList>
    </citation>
    <scope>NUCLEOTIDE SEQUENCE [LARGE SCALE MRNA]</scope>
    <source>
        <strain>Berkeley</strain>
        <tissue>Embryo</tissue>
    </source>
</reference>
<reference key="4">
    <citation type="journal article" date="2007" name="Mol. Biosyst.">
        <title>An integrated chemical, mass spectrometric and computational strategy for (quantitative) phosphoproteomics: application to Drosophila melanogaster Kc167 cells.</title>
        <authorList>
            <person name="Bodenmiller B."/>
            <person name="Mueller L.N."/>
            <person name="Pedrioli P.G.A."/>
            <person name="Pflieger D."/>
            <person name="Juenger M.A."/>
            <person name="Eng J.K."/>
            <person name="Aebersold R."/>
            <person name="Tao W.A."/>
        </authorList>
    </citation>
    <scope>PHOSPHORYLATION [LARGE SCALE ANALYSIS] AT SER-33 AND SER-140</scope>
    <scope>IDENTIFICATION BY MASS SPECTROMETRY</scope>
</reference>
<reference key="5">
    <citation type="journal article" date="2008" name="J. Proteome Res.">
        <title>Phosphoproteome analysis of Drosophila melanogaster embryos.</title>
        <authorList>
            <person name="Zhai B."/>
            <person name="Villen J."/>
            <person name="Beausoleil S.A."/>
            <person name="Mintseris J."/>
            <person name="Gygi S.P."/>
        </authorList>
    </citation>
    <scope>PHOSPHORYLATION [LARGE SCALE ANALYSIS] AT SER-22; SER-24; SER-28; SER-33; SER-139 AND SER-140</scope>
    <scope>IDENTIFICATION BY MASS SPECTROMETRY</scope>
    <source>
        <tissue>Embryo</tissue>
    </source>
</reference>
<feature type="chain" id="PRO_0000372846" description="Cold shock domain-containing protein CG9705">
    <location>
        <begin position="1"/>
        <end position="143"/>
    </location>
</feature>
<feature type="domain" description="CSD">
    <location>
        <begin position="54"/>
        <end position="121"/>
    </location>
</feature>
<feature type="region of interest" description="Disordered" evidence="1">
    <location>
        <begin position="1"/>
        <end position="30"/>
    </location>
</feature>
<feature type="modified residue" description="Phosphoserine" evidence="3">
    <location>
        <position position="22"/>
    </location>
</feature>
<feature type="modified residue" description="Phosphoserine" evidence="3">
    <location>
        <position position="24"/>
    </location>
</feature>
<feature type="modified residue" description="Phosphoserine" evidence="3">
    <location>
        <position position="28"/>
    </location>
</feature>
<feature type="modified residue" description="Phosphoserine" evidence="2 3">
    <location>
        <position position="33"/>
    </location>
</feature>
<feature type="modified residue" description="Phosphoserine" evidence="3">
    <location>
        <position position="139"/>
    </location>
</feature>
<feature type="modified residue" description="Phosphoserine" evidence="2 3">
    <location>
        <position position="140"/>
    </location>
</feature>
<evidence type="ECO:0000256" key="1">
    <source>
        <dbReference type="SAM" id="MobiDB-lite"/>
    </source>
</evidence>
<evidence type="ECO:0000269" key="2">
    <source>
    </source>
</evidence>
<evidence type="ECO:0000269" key="3">
    <source>
    </source>
</evidence>
<sequence>MTEPRTPEKLLAAKPPVLHHNSHSPNASLQLPSPIITRRTRTASTSARALENPVVTGMVKSFSRTKGHGFITPNAGGEDVFCHVSDIEGEYVPMPGDEVKYRLCAIPPKYEKHQAVHVQISHLTPEVHHKWEEPFYGGSSPAK</sequence>
<dbReference type="EMBL" id="AE014296">
    <property type="protein sequence ID" value="AAF49414.1"/>
    <property type="molecule type" value="Genomic_DNA"/>
</dbReference>
<dbReference type="EMBL" id="AE014296">
    <property type="protein sequence ID" value="AAN11740.1"/>
    <property type="molecule type" value="Genomic_DNA"/>
</dbReference>
<dbReference type="EMBL" id="AY060441">
    <property type="protein sequence ID" value="AAL25480.1"/>
    <property type="molecule type" value="mRNA"/>
</dbReference>
<dbReference type="RefSeq" id="NP_001261972.1">
    <property type="nucleotide sequence ID" value="NM_001275043.1"/>
</dbReference>
<dbReference type="RefSeq" id="NP_648920.1">
    <property type="nucleotide sequence ID" value="NM_140663.4"/>
</dbReference>
<dbReference type="RefSeq" id="NP_730197.1">
    <property type="nucleotide sequence ID" value="NM_168683.2"/>
</dbReference>
<dbReference type="SMR" id="Q9VVA0"/>
<dbReference type="BioGRID" id="65174">
    <property type="interactions" value="14"/>
</dbReference>
<dbReference type="FunCoup" id="Q9VVA0">
    <property type="interactions" value="503"/>
</dbReference>
<dbReference type="IntAct" id="Q9VVA0">
    <property type="interactions" value="127"/>
</dbReference>
<dbReference type="STRING" id="7227.FBpp0075084"/>
<dbReference type="iPTMnet" id="Q9VVA0"/>
<dbReference type="PaxDb" id="7227-FBpp0075083"/>
<dbReference type="DNASU" id="39875"/>
<dbReference type="EnsemblMetazoa" id="FBtr0075324">
    <property type="protein sequence ID" value="FBpp0075083"/>
    <property type="gene ID" value="FBgn0036661"/>
</dbReference>
<dbReference type="EnsemblMetazoa" id="FBtr0075325">
    <property type="protein sequence ID" value="FBpp0075084"/>
    <property type="gene ID" value="FBgn0036661"/>
</dbReference>
<dbReference type="EnsemblMetazoa" id="FBtr0333607">
    <property type="protein sequence ID" value="FBpp0305784"/>
    <property type="gene ID" value="FBgn0036661"/>
</dbReference>
<dbReference type="GeneID" id="39875"/>
<dbReference type="KEGG" id="dme:Dmel_CG9705"/>
<dbReference type="UCSC" id="CG9705-RA">
    <property type="organism name" value="d. melanogaster"/>
</dbReference>
<dbReference type="AGR" id="FB:FBgn0036661"/>
<dbReference type="FlyBase" id="FBgn0036661">
    <property type="gene designation" value="CG9705"/>
</dbReference>
<dbReference type="VEuPathDB" id="VectorBase:FBgn0036661"/>
<dbReference type="eggNOG" id="KOG3070">
    <property type="taxonomic scope" value="Eukaryota"/>
</dbReference>
<dbReference type="GeneTree" id="ENSGT00390000000022"/>
<dbReference type="HOGENOM" id="CLU_139526_0_0_1"/>
<dbReference type="InParanoid" id="Q9VVA0"/>
<dbReference type="OMA" id="PIIHKRN"/>
<dbReference type="OrthoDB" id="448492at2759"/>
<dbReference type="PhylomeDB" id="Q9VVA0"/>
<dbReference type="BioGRID-ORCS" id="39875">
    <property type="hits" value="1 hit in 3 CRISPR screens"/>
</dbReference>
<dbReference type="ChiTaRS" id="CG9705">
    <property type="organism name" value="fly"/>
</dbReference>
<dbReference type="GenomeRNAi" id="39875"/>
<dbReference type="PRO" id="PR:Q9VVA0"/>
<dbReference type="Proteomes" id="UP000000803">
    <property type="component" value="Chromosome 3L"/>
</dbReference>
<dbReference type="Bgee" id="FBgn0036661">
    <property type="expression patterns" value="Expressed in egg cell and 252 other cell types or tissues"/>
</dbReference>
<dbReference type="ExpressionAtlas" id="Q9VVA0">
    <property type="expression patterns" value="baseline and differential"/>
</dbReference>
<dbReference type="GO" id="GO:0005737">
    <property type="term" value="C:cytoplasm"/>
    <property type="evidence" value="ECO:0000318"/>
    <property type="project" value="GO_Central"/>
</dbReference>
<dbReference type="GO" id="GO:0003730">
    <property type="term" value="F:mRNA 3'-UTR binding"/>
    <property type="evidence" value="ECO:0000318"/>
    <property type="project" value="GO_Central"/>
</dbReference>
<dbReference type="GO" id="GO:0048813">
    <property type="term" value="P:dendrite morphogenesis"/>
    <property type="evidence" value="ECO:0000315"/>
    <property type="project" value="FlyBase"/>
</dbReference>
<dbReference type="GO" id="GO:0043488">
    <property type="term" value="P:regulation of mRNA stability"/>
    <property type="evidence" value="ECO:0000318"/>
    <property type="project" value="GO_Central"/>
</dbReference>
<dbReference type="CDD" id="cd04458">
    <property type="entry name" value="CSP_CDS"/>
    <property type="match status" value="1"/>
</dbReference>
<dbReference type="FunFam" id="2.40.50.140:FF:000086">
    <property type="entry name" value="Cold shock domain-containing protein C2"/>
    <property type="match status" value="1"/>
</dbReference>
<dbReference type="Gene3D" id="2.40.50.140">
    <property type="entry name" value="Nucleic acid-binding proteins"/>
    <property type="match status" value="1"/>
</dbReference>
<dbReference type="InterPro" id="IPR052069">
    <property type="entry name" value="Ca-reg_mRNA-binding_domain"/>
</dbReference>
<dbReference type="InterPro" id="IPR011129">
    <property type="entry name" value="CSD"/>
</dbReference>
<dbReference type="InterPro" id="IPR019844">
    <property type="entry name" value="CSD_CS"/>
</dbReference>
<dbReference type="InterPro" id="IPR002059">
    <property type="entry name" value="CSP_DNA-bd"/>
</dbReference>
<dbReference type="InterPro" id="IPR012340">
    <property type="entry name" value="NA-bd_OB-fold"/>
</dbReference>
<dbReference type="PANTHER" id="PTHR12962">
    <property type="entry name" value="CALCIUM-REGULATED HEAT STABLE PROTEIN CRHSP-24-RELATED"/>
    <property type="match status" value="1"/>
</dbReference>
<dbReference type="PANTHER" id="PTHR12962:SF1">
    <property type="entry name" value="COLD SHOCK DOMAIN-CONTAINING PROTEIN CG9705"/>
    <property type="match status" value="1"/>
</dbReference>
<dbReference type="Pfam" id="PF00313">
    <property type="entry name" value="CSD"/>
    <property type="match status" value="1"/>
</dbReference>
<dbReference type="SMART" id="SM00357">
    <property type="entry name" value="CSP"/>
    <property type="match status" value="1"/>
</dbReference>
<dbReference type="SUPFAM" id="SSF50249">
    <property type="entry name" value="Nucleic acid-binding proteins"/>
    <property type="match status" value="1"/>
</dbReference>
<dbReference type="PROSITE" id="PS00352">
    <property type="entry name" value="CSD_1"/>
    <property type="match status" value="1"/>
</dbReference>
<dbReference type="PROSITE" id="PS51857">
    <property type="entry name" value="CSD_2"/>
    <property type="match status" value="1"/>
</dbReference>
<accession>Q9VVA0</accession>
<name>Y9705_DROME</name>
<protein>
    <recommendedName>
        <fullName>Cold shock domain-containing protein CG9705</fullName>
    </recommendedName>
</protein>
<gene>
    <name type="ORF">CG9705</name>
</gene>